<feature type="chain" id="PRO_0000305388" description="Pantothenate synthetase">
    <location>
        <begin position="1"/>
        <end position="285"/>
    </location>
</feature>
<feature type="active site" description="Proton donor" evidence="1">
    <location>
        <position position="37"/>
    </location>
</feature>
<feature type="binding site" evidence="1">
    <location>
        <begin position="30"/>
        <end position="37"/>
    </location>
    <ligand>
        <name>ATP</name>
        <dbReference type="ChEBI" id="CHEBI:30616"/>
    </ligand>
</feature>
<feature type="binding site" evidence="1">
    <location>
        <position position="61"/>
    </location>
    <ligand>
        <name>(R)-pantoate</name>
        <dbReference type="ChEBI" id="CHEBI:15980"/>
    </ligand>
</feature>
<feature type="binding site" evidence="1">
    <location>
        <position position="61"/>
    </location>
    <ligand>
        <name>beta-alanine</name>
        <dbReference type="ChEBI" id="CHEBI:57966"/>
    </ligand>
</feature>
<feature type="binding site" evidence="1">
    <location>
        <begin position="148"/>
        <end position="151"/>
    </location>
    <ligand>
        <name>ATP</name>
        <dbReference type="ChEBI" id="CHEBI:30616"/>
    </ligand>
</feature>
<feature type="binding site" evidence="1">
    <location>
        <position position="154"/>
    </location>
    <ligand>
        <name>(R)-pantoate</name>
        <dbReference type="ChEBI" id="CHEBI:15980"/>
    </ligand>
</feature>
<feature type="binding site" evidence="1">
    <location>
        <begin position="185"/>
        <end position="188"/>
    </location>
    <ligand>
        <name>ATP</name>
        <dbReference type="ChEBI" id="CHEBI:30616"/>
    </ligand>
</feature>
<sequence length="285" mass="31267">MQTAHSVAQVREHVRGWHRKGQSVGFVPTMGNLHDGHISLVREARTRCDVVVVSIFVNPTQFGPNEDFDRYPRTLDADAAALVEAGADLLFAPSVEEMYPLGQNQTWVDVDQLGDHLCGASREGHFRGVTTVVSKLLNIVQPDVAIFGEKDFQQLAILRRMCEELLFPVKIVGAATSRETDGLARSSRNGFLSESERTLAPQLYAHLQQVKTEIIGGERNYRALESRTSQSLNSTGFSVDYITIANARTLAPAGPDDTDLIVAVAAKLGSTRLIDNISLAVVRDR</sequence>
<dbReference type="EC" id="6.3.2.1" evidence="1"/>
<dbReference type="EMBL" id="AM286690">
    <property type="protein sequence ID" value="CAL15784.1"/>
    <property type="molecule type" value="Genomic_DNA"/>
</dbReference>
<dbReference type="RefSeq" id="WP_011587631.1">
    <property type="nucleotide sequence ID" value="NC_008260.1"/>
</dbReference>
<dbReference type="SMR" id="Q0VSR4"/>
<dbReference type="STRING" id="393595.ABO_0336"/>
<dbReference type="KEGG" id="abo:ABO_0336"/>
<dbReference type="eggNOG" id="COG0414">
    <property type="taxonomic scope" value="Bacteria"/>
</dbReference>
<dbReference type="HOGENOM" id="CLU_047148_0_0_6"/>
<dbReference type="OrthoDB" id="9773087at2"/>
<dbReference type="UniPathway" id="UPA00028">
    <property type="reaction ID" value="UER00005"/>
</dbReference>
<dbReference type="Proteomes" id="UP000008871">
    <property type="component" value="Chromosome"/>
</dbReference>
<dbReference type="GO" id="GO:0005829">
    <property type="term" value="C:cytosol"/>
    <property type="evidence" value="ECO:0007669"/>
    <property type="project" value="TreeGrafter"/>
</dbReference>
<dbReference type="GO" id="GO:0005524">
    <property type="term" value="F:ATP binding"/>
    <property type="evidence" value="ECO:0007669"/>
    <property type="project" value="UniProtKB-KW"/>
</dbReference>
<dbReference type="GO" id="GO:0004592">
    <property type="term" value="F:pantoate-beta-alanine ligase activity"/>
    <property type="evidence" value="ECO:0007669"/>
    <property type="project" value="UniProtKB-UniRule"/>
</dbReference>
<dbReference type="GO" id="GO:0015940">
    <property type="term" value="P:pantothenate biosynthetic process"/>
    <property type="evidence" value="ECO:0007669"/>
    <property type="project" value="UniProtKB-UniRule"/>
</dbReference>
<dbReference type="CDD" id="cd00560">
    <property type="entry name" value="PanC"/>
    <property type="match status" value="1"/>
</dbReference>
<dbReference type="FunFam" id="3.30.1300.10:FF:000001">
    <property type="entry name" value="Pantothenate synthetase"/>
    <property type="match status" value="1"/>
</dbReference>
<dbReference type="FunFam" id="3.40.50.620:FF:000013">
    <property type="entry name" value="Pantothenate synthetase"/>
    <property type="match status" value="1"/>
</dbReference>
<dbReference type="Gene3D" id="3.40.50.620">
    <property type="entry name" value="HUPs"/>
    <property type="match status" value="1"/>
</dbReference>
<dbReference type="Gene3D" id="3.30.1300.10">
    <property type="entry name" value="Pantoate-beta-alanine ligase, C-terminal domain"/>
    <property type="match status" value="1"/>
</dbReference>
<dbReference type="HAMAP" id="MF_00158">
    <property type="entry name" value="PanC"/>
    <property type="match status" value="1"/>
</dbReference>
<dbReference type="InterPro" id="IPR004821">
    <property type="entry name" value="Cyt_trans-like"/>
</dbReference>
<dbReference type="InterPro" id="IPR003721">
    <property type="entry name" value="Pantoate_ligase"/>
</dbReference>
<dbReference type="InterPro" id="IPR042176">
    <property type="entry name" value="Pantoate_ligase_C"/>
</dbReference>
<dbReference type="InterPro" id="IPR014729">
    <property type="entry name" value="Rossmann-like_a/b/a_fold"/>
</dbReference>
<dbReference type="NCBIfam" id="TIGR00125">
    <property type="entry name" value="cyt_tran_rel"/>
    <property type="match status" value="1"/>
</dbReference>
<dbReference type="NCBIfam" id="TIGR00018">
    <property type="entry name" value="panC"/>
    <property type="match status" value="1"/>
</dbReference>
<dbReference type="PANTHER" id="PTHR21299">
    <property type="entry name" value="CYTIDYLATE KINASE/PANTOATE-BETA-ALANINE LIGASE"/>
    <property type="match status" value="1"/>
</dbReference>
<dbReference type="PANTHER" id="PTHR21299:SF1">
    <property type="entry name" value="PANTOATE--BETA-ALANINE LIGASE"/>
    <property type="match status" value="1"/>
</dbReference>
<dbReference type="Pfam" id="PF02569">
    <property type="entry name" value="Pantoate_ligase"/>
    <property type="match status" value="1"/>
</dbReference>
<dbReference type="SUPFAM" id="SSF52374">
    <property type="entry name" value="Nucleotidylyl transferase"/>
    <property type="match status" value="1"/>
</dbReference>
<gene>
    <name evidence="1" type="primary">panC</name>
    <name type="ordered locus">ABO_0336</name>
</gene>
<accession>Q0VSR4</accession>
<organism>
    <name type="scientific">Alcanivorax borkumensis (strain ATCC 700651 / DSM 11573 / NCIMB 13689 / SK2)</name>
    <dbReference type="NCBI Taxonomy" id="393595"/>
    <lineage>
        <taxon>Bacteria</taxon>
        <taxon>Pseudomonadati</taxon>
        <taxon>Pseudomonadota</taxon>
        <taxon>Gammaproteobacteria</taxon>
        <taxon>Oceanospirillales</taxon>
        <taxon>Alcanivoracaceae</taxon>
        <taxon>Alcanivorax</taxon>
    </lineage>
</organism>
<comment type="function">
    <text evidence="1">Catalyzes the condensation of pantoate with beta-alanine in an ATP-dependent reaction via a pantoyl-adenylate intermediate.</text>
</comment>
<comment type="catalytic activity">
    <reaction evidence="1">
        <text>(R)-pantoate + beta-alanine + ATP = (R)-pantothenate + AMP + diphosphate + H(+)</text>
        <dbReference type="Rhea" id="RHEA:10912"/>
        <dbReference type="ChEBI" id="CHEBI:15378"/>
        <dbReference type="ChEBI" id="CHEBI:15980"/>
        <dbReference type="ChEBI" id="CHEBI:29032"/>
        <dbReference type="ChEBI" id="CHEBI:30616"/>
        <dbReference type="ChEBI" id="CHEBI:33019"/>
        <dbReference type="ChEBI" id="CHEBI:57966"/>
        <dbReference type="ChEBI" id="CHEBI:456215"/>
        <dbReference type="EC" id="6.3.2.1"/>
    </reaction>
</comment>
<comment type="pathway">
    <text evidence="1">Cofactor biosynthesis; (R)-pantothenate biosynthesis; (R)-pantothenate from (R)-pantoate and beta-alanine: step 1/1.</text>
</comment>
<comment type="subunit">
    <text evidence="1">Homodimer.</text>
</comment>
<comment type="subcellular location">
    <subcellularLocation>
        <location evidence="1">Cytoplasm</location>
    </subcellularLocation>
</comment>
<comment type="miscellaneous">
    <text evidence="1">The reaction proceeds by a bi uni uni bi ping pong mechanism.</text>
</comment>
<comment type="similarity">
    <text evidence="1">Belongs to the pantothenate synthetase family.</text>
</comment>
<proteinExistence type="inferred from homology"/>
<evidence type="ECO:0000255" key="1">
    <source>
        <dbReference type="HAMAP-Rule" id="MF_00158"/>
    </source>
</evidence>
<protein>
    <recommendedName>
        <fullName evidence="1">Pantothenate synthetase</fullName>
        <shortName evidence="1">PS</shortName>
        <ecNumber evidence="1">6.3.2.1</ecNumber>
    </recommendedName>
    <alternativeName>
        <fullName evidence="1">Pantoate--beta-alanine ligase</fullName>
    </alternativeName>
    <alternativeName>
        <fullName evidence="1">Pantoate-activating enzyme</fullName>
    </alternativeName>
</protein>
<reference key="1">
    <citation type="journal article" date="2006" name="Nat. Biotechnol.">
        <title>Genome sequence of the ubiquitous hydrocarbon-degrading marine bacterium Alcanivorax borkumensis.</title>
        <authorList>
            <person name="Schneiker S."/>
            <person name="Martins dos Santos V.A.P."/>
            <person name="Bartels D."/>
            <person name="Bekel T."/>
            <person name="Brecht M."/>
            <person name="Buhrmester J."/>
            <person name="Chernikova T.N."/>
            <person name="Denaro R."/>
            <person name="Ferrer M."/>
            <person name="Gertler C."/>
            <person name="Goesmann A."/>
            <person name="Golyshina O.V."/>
            <person name="Kaminski F."/>
            <person name="Khachane A.N."/>
            <person name="Lang S."/>
            <person name="Linke B."/>
            <person name="McHardy A.C."/>
            <person name="Meyer F."/>
            <person name="Nechitaylo T."/>
            <person name="Puehler A."/>
            <person name="Regenhardt D."/>
            <person name="Rupp O."/>
            <person name="Sabirova J.S."/>
            <person name="Selbitschka W."/>
            <person name="Yakimov M.M."/>
            <person name="Timmis K.N."/>
            <person name="Vorhoelter F.-J."/>
            <person name="Weidner S."/>
            <person name="Kaiser O."/>
            <person name="Golyshin P.N."/>
        </authorList>
    </citation>
    <scope>NUCLEOTIDE SEQUENCE [LARGE SCALE GENOMIC DNA]</scope>
    <source>
        <strain>ATCC 700651 / DSM 11573 / NCIMB 13689 / SK2</strain>
    </source>
</reference>
<name>PANC_ALCBS</name>
<keyword id="KW-0067">ATP-binding</keyword>
<keyword id="KW-0963">Cytoplasm</keyword>
<keyword id="KW-0436">Ligase</keyword>
<keyword id="KW-0547">Nucleotide-binding</keyword>
<keyword id="KW-0566">Pantothenate biosynthesis</keyword>
<keyword id="KW-1185">Reference proteome</keyword>